<reference key="1">
    <citation type="journal article" date="1998" name="Nature">
        <title>The complete genome of the hyperthermophilic bacterium Aquifex aeolicus.</title>
        <authorList>
            <person name="Deckert G."/>
            <person name="Warren P.V."/>
            <person name="Gaasterland T."/>
            <person name="Young W.G."/>
            <person name="Lenox A.L."/>
            <person name="Graham D.E."/>
            <person name="Overbeek R."/>
            <person name="Snead M.A."/>
            <person name="Keller M."/>
            <person name="Aujay M."/>
            <person name="Huber R."/>
            <person name="Feldman R.A."/>
            <person name="Short J.M."/>
            <person name="Olsen G.J."/>
            <person name="Swanson R.V."/>
        </authorList>
    </citation>
    <scope>NUCLEOTIDE SEQUENCE [LARGE SCALE GENOMIC DNA]</scope>
    <source>
        <strain>VF5</strain>
    </source>
</reference>
<reference key="2">
    <citation type="journal article" date="2008" name="FEBS J.">
        <title>2,5-diamino-6-ribitylamino-4(3H)-pyrimidinone 5'-phosphate synthases of fungi and archaea.</title>
        <authorList>
            <person name="Romisch-Margl W."/>
            <person name="Eisenreich W."/>
            <person name="Haase I."/>
            <person name="Bacher A."/>
            <person name="Fischer M."/>
        </authorList>
    </citation>
    <scope>FUNCTION</scope>
    <scope>CATALYTIC ACTIVITY</scope>
    <scope>SUBUNIT</scope>
    <source>
        <strain>VF5</strain>
    </source>
</reference>
<comment type="function">
    <text evidence="2">Catalyzes an early step in riboflavin biosynthesis, the NADPH-dependent reduction of the ribose side chain of 2,5-diamino-6-ribosylamino-4(3H)-pyrimidinone 5'-phosphate, yielding 2,5-diamino-6-ribitylamino-4(3H)-pyrimidinone 5'-phosphate.</text>
</comment>
<comment type="catalytic activity">
    <reaction evidence="2">
        <text>2,5-diamino-6-(1-D-ribitylamino)pyrimidin-4(3H)-one 5'-phosphate + NADP(+) = 2,5-diamino-6-(1-D-ribosylamino)pyrimidin-4(3H)-one 5'-phosphate + NADPH + H(+)</text>
        <dbReference type="Rhea" id="RHEA:27278"/>
        <dbReference type="ChEBI" id="CHEBI:15378"/>
        <dbReference type="ChEBI" id="CHEBI:57783"/>
        <dbReference type="ChEBI" id="CHEBI:58349"/>
        <dbReference type="ChEBI" id="CHEBI:58890"/>
        <dbReference type="ChEBI" id="CHEBI:59545"/>
        <dbReference type="EC" id="1.1.1.302"/>
    </reaction>
</comment>
<comment type="catalytic activity">
    <reaction evidence="2">
        <text>2,5-diamino-6-(1-D-ribitylamino)pyrimidin-4(3H)-one 5'-phosphate + NAD(+) = 2,5-diamino-6-(1-D-ribosylamino)pyrimidin-4(3H)-one 5'-phosphate + NADH + H(+)</text>
        <dbReference type="Rhea" id="RHEA:27274"/>
        <dbReference type="ChEBI" id="CHEBI:15378"/>
        <dbReference type="ChEBI" id="CHEBI:57540"/>
        <dbReference type="ChEBI" id="CHEBI:57945"/>
        <dbReference type="ChEBI" id="CHEBI:58890"/>
        <dbReference type="ChEBI" id="CHEBI:59545"/>
        <dbReference type="EC" id="1.1.1.302"/>
    </reaction>
</comment>
<comment type="pathway">
    <text>Cofactor biosynthesis; riboflavin biosynthesis.</text>
</comment>
<comment type="subunit">
    <text evidence="2">Homodimer.</text>
</comment>
<comment type="similarity">
    <text evidence="3">Belongs to the HTP reductase family.</text>
</comment>
<proteinExistence type="evidence at protein level"/>
<organism>
    <name type="scientific">Aquifex aeolicus (strain VF5)</name>
    <dbReference type="NCBI Taxonomy" id="224324"/>
    <lineage>
        <taxon>Bacteria</taxon>
        <taxon>Pseudomonadati</taxon>
        <taxon>Aquificota</taxon>
        <taxon>Aquificia</taxon>
        <taxon>Aquificales</taxon>
        <taxon>Aquificaceae</taxon>
        <taxon>Aquifex</taxon>
    </lineage>
</organism>
<accession>O66747</accession>
<name>RIB7_AQUAE</name>
<sequence length="224" mass="25257">MERPYVIIVSEVSVDGKLTLYRGASSKELMSLMDEEAYKYLHEIRAKVDGIMVGCETVRTDNPSLTVRYAKGKNPVRIIPCSTANVPLDANVLNTKEAPTIIATTERAPKERLEKIKELGAEVIVVGDELVDFDKLLPELYRRGIKSLMVEGGASINWEFVRRRVVDEIRLIHLPVIVGGENVPTLVGGEGFKKLKNLLHLRLRSHFVRGKQLITEWEVVNKIR</sequence>
<gene>
    <name type="primary">ribD2</name>
    <name type="ordered locus">aq_436</name>
</gene>
<evidence type="ECO:0000250" key="1"/>
<evidence type="ECO:0000269" key="2">
    <source>
    </source>
</evidence>
<evidence type="ECO:0000305" key="3"/>
<protein>
    <recommendedName>
        <fullName>2,5-diamino-6-ribosylamino-4(3H)-pyrimidinone 5'-phosphate reductase</fullName>
        <shortName>DAROPP reductase</shortName>
        <shortName>DARP reductase</shortName>
        <ecNumber>1.1.1.302</ecNumber>
    </recommendedName>
    <alternativeName>
        <fullName>2,5-diamino-6-(5-phospho-D-ribosylamino)pyrimidin-4(3H)-one reductase</fullName>
    </alternativeName>
    <alternativeName>
        <fullName>2,5-diamino-6-ribitylamino-4(3H)-pyrimidinone 5'-phosphate synthase</fullName>
        <shortName>DARIPP synthase</shortName>
    </alternativeName>
    <alternativeName>
        <fullName>AaeRED</fullName>
    </alternativeName>
</protein>
<dbReference type="EC" id="1.1.1.302"/>
<dbReference type="EMBL" id="AE000657">
    <property type="protein sequence ID" value="AAC06708.1"/>
    <property type="molecule type" value="Genomic_DNA"/>
</dbReference>
<dbReference type="PIR" id="G70339">
    <property type="entry name" value="G70339"/>
</dbReference>
<dbReference type="RefSeq" id="NP_213307.1">
    <property type="nucleotide sequence ID" value="NC_000918.1"/>
</dbReference>
<dbReference type="RefSeq" id="WP_010880245.1">
    <property type="nucleotide sequence ID" value="NC_000918.1"/>
</dbReference>
<dbReference type="SMR" id="O66747"/>
<dbReference type="STRING" id="224324.aq_436"/>
<dbReference type="EnsemblBacteria" id="AAC06708">
    <property type="protein sequence ID" value="AAC06708"/>
    <property type="gene ID" value="aq_436"/>
</dbReference>
<dbReference type="KEGG" id="aae:aq_436"/>
<dbReference type="PATRIC" id="fig|224324.8.peg.360"/>
<dbReference type="eggNOG" id="COG1985">
    <property type="taxonomic scope" value="Bacteria"/>
</dbReference>
<dbReference type="HOGENOM" id="CLU_036590_4_1_0"/>
<dbReference type="InParanoid" id="O66747"/>
<dbReference type="OrthoDB" id="9800865at2"/>
<dbReference type="BRENDA" id="1.1.1.302">
    <property type="organism ID" value="396"/>
</dbReference>
<dbReference type="UniPathway" id="UPA00275"/>
<dbReference type="Proteomes" id="UP000000798">
    <property type="component" value="Chromosome"/>
</dbReference>
<dbReference type="GO" id="GO:0008703">
    <property type="term" value="F:5-amino-6-(5-phosphoribosylamino)uracil reductase activity"/>
    <property type="evidence" value="ECO:0007669"/>
    <property type="project" value="InterPro"/>
</dbReference>
<dbReference type="GO" id="GO:0050661">
    <property type="term" value="F:NADP binding"/>
    <property type="evidence" value="ECO:0000314"/>
    <property type="project" value="UniProtKB"/>
</dbReference>
<dbReference type="GO" id="GO:0016616">
    <property type="term" value="F:oxidoreductase activity, acting on the CH-OH group of donors, NAD or NADP as acceptor"/>
    <property type="evidence" value="ECO:0000314"/>
    <property type="project" value="UniProtKB"/>
</dbReference>
<dbReference type="GO" id="GO:0046983">
    <property type="term" value="F:protein dimerization activity"/>
    <property type="evidence" value="ECO:0000314"/>
    <property type="project" value="UniProtKB"/>
</dbReference>
<dbReference type="GO" id="GO:0009231">
    <property type="term" value="P:riboflavin biosynthetic process"/>
    <property type="evidence" value="ECO:0000314"/>
    <property type="project" value="UniProtKB"/>
</dbReference>
<dbReference type="Gene3D" id="3.40.430.10">
    <property type="entry name" value="Dihydrofolate Reductase, subunit A"/>
    <property type="match status" value="1"/>
</dbReference>
<dbReference type="InterPro" id="IPR024072">
    <property type="entry name" value="DHFR-like_dom_sf"/>
</dbReference>
<dbReference type="InterPro" id="IPR006401">
    <property type="entry name" value="Rib_reduct_arc"/>
</dbReference>
<dbReference type="InterPro" id="IPR011549">
    <property type="entry name" value="RibD_C"/>
</dbReference>
<dbReference type="InterPro" id="IPR002734">
    <property type="entry name" value="RibDG_C"/>
</dbReference>
<dbReference type="InterPro" id="IPR050765">
    <property type="entry name" value="Riboflavin_Biosynth_HTPR"/>
</dbReference>
<dbReference type="NCBIfam" id="TIGR01508">
    <property type="entry name" value="rib_reduct_arch"/>
    <property type="match status" value="1"/>
</dbReference>
<dbReference type="NCBIfam" id="TIGR00227">
    <property type="entry name" value="ribD_Cterm"/>
    <property type="match status" value="1"/>
</dbReference>
<dbReference type="PANTHER" id="PTHR38011:SF7">
    <property type="entry name" value="2,5-DIAMINO-6-RIBOSYLAMINO-4(3H)-PYRIMIDINONE 5'-PHOSPHATE REDUCTASE"/>
    <property type="match status" value="1"/>
</dbReference>
<dbReference type="PANTHER" id="PTHR38011">
    <property type="entry name" value="DIHYDROFOLATE REDUCTASE FAMILY PROTEIN (AFU_ORTHOLOGUE AFUA_8G06820)"/>
    <property type="match status" value="1"/>
</dbReference>
<dbReference type="Pfam" id="PF01872">
    <property type="entry name" value="RibD_C"/>
    <property type="match status" value="1"/>
</dbReference>
<dbReference type="SUPFAM" id="SSF53597">
    <property type="entry name" value="Dihydrofolate reductase-like"/>
    <property type="match status" value="1"/>
</dbReference>
<feature type="chain" id="PRO_0000418811" description="2,5-diamino-6-ribosylamino-4(3H)-pyrimidinone 5'-phosphate reductase">
    <location>
        <begin position="1"/>
        <end position="224"/>
    </location>
</feature>
<feature type="binding site" evidence="1">
    <location>
        <position position="57"/>
    </location>
    <ligand>
        <name>NADP(+)</name>
        <dbReference type="ChEBI" id="CHEBI:58349"/>
    </ligand>
</feature>
<feature type="binding site" evidence="1">
    <location>
        <position position="61"/>
    </location>
    <ligand>
        <name>NADP(+)</name>
        <dbReference type="ChEBI" id="CHEBI:58349"/>
    </ligand>
</feature>
<feature type="binding site" evidence="1">
    <location>
        <begin position="82"/>
        <end position="85"/>
    </location>
    <ligand>
        <name>NADP(+)</name>
        <dbReference type="ChEBI" id="CHEBI:58349"/>
    </ligand>
</feature>
<feature type="binding site" evidence="1">
    <location>
        <position position="131"/>
    </location>
    <ligand>
        <name>NADP(+)</name>
        <dbReference type="ChEBI" id="CHEBI:58349"/>
    </ligand>
</feature>
<feature type="binding site" evidence="1">
    <location>
        <begin position="153"/>
        <end position="156"/>
    </location>
    <ligand>
        <name>NADP(+)</name>
        <dbReference type="ChEBI" id="CHEBI:58349"/>
    </ligand>
</feature>
<keyword id="KW-0521">NADP</keyword>
<keyword id="KW-0560">Oxidoreductase</keyword>
<keyword id="KW-1185">Reference proteome</keyword>
<keyword id="KW-0686">Riboflavin biosynthesis</keyword>